<dbReference type="EC" id="7.1.2.2" evidence="1"/>
<dbReference type="EMBL" id="AE017244">
    <property type="protein sequence ID" value="AAZ53430.1"/>
    <property type="molecule type" value="Genomic_DNA"/>
</dbReference>
<dbReference type="RefSeq" id="WP_011289973.1">
    <property type="nucleotide sequence ID" value="NC_007332.1"/>
</dbReference>
<dbReference type="SMR" id="Q4A8V9"/>
<dbReference type="KEGG" id="mhp:MHP7448_0053"/>
<dbReference type="HOGENOM" id="CLU_022398_0_2_14"/>
<dbReference type="Proteomes" id="UP000000553">
    <property type="component" value="Chromosome"/>
</dbReference>
<dbReference type="GO" id="GO:0005886">
    <property type="term" value="C:plasma membrane"/>
    <property type="evidence" value="ECO:0007669"/>
    <property type="project" value="UniProtKB-SubCell"/>
</dbReference>
<dbReference type="GO" id="GO:0045259">
    <property type="term" value="C:proton-transporting ATP synthase complex"/>
    <property type="evidence" value="ECO:0007669"/>
    <property type="project" value="UniProtKB-KW"/>
</dbReference>
<dbReference type="GO" id="GO:0005524">
    <property type="term" value="F:ATP binding"/>
    <property type="evidence" value="ECO:0007669"/>
    <property type="project" value="UniProtKB-UniRule"/>
</dbReference>
<dbReference type="GO" id="GO:0016887">
    <property type="term" value="F:ATP hydrolysis activity"/>
    <property type="evidence" value="ECO:0007669"/>
    <property type="project" value="InterPro"/>
</dbReference>
<dbReference type="GO" id="GO:0046933">
    <property type="term" value="F:proton-transporting ATP synthase activity, rotational mechanism"/>
    <property type="evidence" value="ECO:0007669"/>
    <property type="project" value="UniProtKB-UniRule"/>
</dbReference>
<dbReference type="CDD" id="cd18110">
    <property type="entry name" value="ATP-synt_F1_beta_C"/>
    <property type="match status" value="1"/>
</dbReference>
<dbReference type="CDD" id="cd18115">
    <property type="entry name" value="ATP-synt_F1_beta_N"/>
    <property type="match status" value="1"/>
</dbReference>
<dbReference type="CDD" id="cd01133">
    <property type="entry name" value="F1-ATPase_beta_CD"/>
    <property type="match status" value="1"/>
</dbReference>
<dbReference type="FunFam" id="1.10.1140.10:FF:000001">
    <property type="entry name" value="ATP synthase subunit beta"/>
    <property type="match status" value="1"/>
</dbReference>
<dbReference type="FunFam" id="3.40.50.300:FF:000004">
    <property type="entry name" value="ATP synthase subunit beta"/>
    <property type="match status" value="1"/>
</dbReference>
<dbReference type="Gene3D" id="2.40.10.170">
    <property type="match status" value="1"/>
</dbReference>
<dbReference type="Gene3D" id="1.10.1140.10">
    <property type="entry name" value="Bovine Mitochondrial F1-atpase, Atp Synthase Beta Chain, Chain D, domain 3"/>
    <property type="match status" value="1"/>
</dbReference>
<dbReference type="Gene3D" id="3.40.50.300">
    <property type="entry name" value="P-loop containing nucleotide triphosphate hydrolases"/>
    <property type="match status" value="1"/>
</dbReference>
<dbReference type="HAMAP" id="MF_01347">
    <property type="entry name" value="ATP_synth_beta_bact"/>
    <property type="match status" value="1"/>
</dbReference>
<dbReference type="InterPro" id="IPR003593">
    <property type="entry name" value="AAA+_ATPase"/>
</dbReference>
<dbReference type="InterPro" id="IPR055190">
    <property type="entry name" value="ATP-synt_VA_C"/>
</dbReference>
<dbReference type="InterPro" id="IPR005722">
    <property type="entry name" value="ATP_synth_F1_bsu"/>
</dbReference>
<dbReference type="InterPro" id="IPR020003">
    <property type="entry name" value="ATPase_a/bsu_AS"/>
</dbReference>
<dbReference type="InterPro" id="IPR050053">
    <property type="entry name" value="ATPase_alpha/beta_chains"/>
</dbReference>
<dbReference type="InterPro" id="IPR004100">
    <property type="entry name" value="ATPase_F1/V1/A1_a/bsu_N"/>
</dbReference>
<dbReference type="InterPro" id="IPR036121">
    <property type="entry name" value="ATPase_F1/V1/A1_a/bsu_N_sf"/>
</dbReference>
<dbReference type="InterPro" id="IPR000194">
    <property type="entry name" value="ATPase_F1/V1/A1_a/bsu_nucl-bd"/>
</dbReference>
<dbReference type="InterPro" id="IPR024034">
    <property type="entry name" value="ATPase_F1/V1_b/a_C"/>
</dbReference>
<dbReference type="InterPro" id="IPR027417">
    <property type="entry name" value="P-loop_NTPase"/>
</dbReference>
<dbReference type="NCBIfam" id="TIGR01039">
    <property type="entry name" value="atpD"/>
    <property type="match status" value="1"/>
</dbReference>
<dbReference type="PANTHER" id="PTHR15184">
    <property type="entry name" value="ATP SYNTHASE"/>
    <property type="match status" value="1"/>
</dbReference>
<dbReference type="PANTHER" id="PTHR15184:SF71">
    <property type="entry name" value="ATP SYNTHASE SUBUNIT BETA, MITOCHONDRIAL"/>
    <property type="match status" value="1"/>
</dbReference>
<dbReference type="Pfam" id="PF00006">
    <property type="entry name" value="ATP-synt_ab"/>
    <property type="match status" value="1"/>
</dbReference>
<dbReference type="Pfam" id="PF02874">
    <property type="entry name" value="ATP-synt_ab_N"/>
    <property type="match status" value="1"/>
</dbReference>
<dbReference type="Pfam" id="PF22919">
    <property type="entry name" value="ATP-synt_VA_C"/>
    <property type="match status" value="1"/>
</dbReference>
<dbReference type="SMART" id="SM00382">
    <property type="entry name" value="AAA"/>
    <property type="match status" value="1"/>
</dbReference>
<dbReference type="SUPFAM" id="SSF47917">
    <property type="entry name" value="C-terminal domain of alpha and beta subunits of F1 ATP synthase"/>
    <property type="match status" value="1"/>
</dbReference>
<dbReference type="SUPFAM" id="SSF50615">
    <property type="entry name" value="N-terminal domain of alpha and beta subunits of F1 ATP synthase"/>
    <property type="match status" value="1"/>
</dbReference>
<dbReference type="SUPFAM" id="SSF52540">
    <property type="entry name" value="P-loop containing nucleoside triphosphate hydrolases"/>
    <property type="match status" value="1"/>
</dbReference>
<dbReference type="PROSITE" id="PS00152">
    <property type="entry name" value="ATPASE_ALPHA_BETA"/>
    <property type="match status" value="1"/>
</dbReference>
<accession>Q4A8V9</accession>
<name>ATPB_MESH7</name>
<proteinExistence type="inferred from homology"/>
<reference key="1">
    <citation type="journal article" date="2005" name="J. Bacteriol.">
        <title>Swine and poultry pathogens: the complete genome sequences of two strains of Mycoplasma hyopneumoniae and a strain of Mycoplasma synoviae.</title>
        <authorList>
            <person name="Vasconcelos A.T.R."/>
            <person name="Ferreira H.B."/>
            <person name="Bizarro C.V."/>
            <person name="Bonatto S.L."/>
            <person name="Carvalho M.O."/>
            <person name="Pinto P.M."/>
            <person name="Almeida D.F."/>
            <person name="Almeida L.G.P."/>
            <person name="Almeida R."/>
            <person name="Alves-Junior L."/>
            <person name="Assuncao E.N."/>
            <person name="Azevedo V.A.C."/>
            <person name="Bogo M.R."/>
            <person name="Brigido M.M."/>
            <person name="Brocchi M."/>
            <person name="Burity H.A."/>
            <person name="Camargo A.A."/>
            <person name="Camargo S.S."/>
            <person name="Carepo M.S."/>
            <person name="Carraro D.M."/>
            <person name="de Mattos Cascardo J.C."/>
            <person name="Castro L.A."/>
            <person name="Cavalcanti G."/>
            <person name="Chemale G."/>
            <person name="Collevatti R.G."/>
            <person name="Cunha C.W."/>
            <person name="Dallagiovanna B."/>
            <person name="Dambros B.P."/>
            <person name="Dellagostin O.A."/>
            <person name="Falcao C."/>
            <person name="Fantinatti-Garboggini F."/>
            <person name="Felipe M.S.S."/>
            <person name="Fiorentin L."/>
            <person name="Franco G.R."/>
            <person name="Freitas N.S.A."/>
            <person name="Frias D."/>
            <person name="Grangeiro T.B."/>
            <person name="Grisard E.C."/>
            <person name="Guimaraes C.T."/>
            <person name="Hungria M."/>
            <person name="Jardim S.N."/>
            <person name="Krieger M.A."/>
            <person name="Laurino J.P."/>
            <person name="Lima L.F.A."/>
            <person name="Lopes M.I."/>
            <person name="Loreto E.L.S."/>
            <person name="Madeira H.M.F."/>
            <person name="Manfio G.P."/>
            <person name="Maranhao A.Q."/>
            <person name="Martinkovics C.T."/>
            <person name="Medeiros S.R.B."/>
            <person name="Moreira M.A.M."/>
            <person name="Neiva M."/>
            <person name="Ramalho-Neto C.E."/>
            <person name="Nicolas M.F."/>
            <person name="Oliveira S.C."/>
            <person name="Paixao R.F.C."/>
            <person name="Pedrosa F.O."/>
            <person name="Pena S.D.J."/>
            <person name="Pereira M."/>
            <person name="Pereira-Ferrari L."/>
            <person name="Piffer I."/>
            <person name="Pinto L.S."/>
            <person name="Potrich D.P."/>
            <person name="Salim A.C.M."/>
            <person name="Santos F.R."/>
            <person name="Schmitt R."/>
            <person name="Schneider M.P.C."/>
            <person name="Schrank A."/>
            <person name="Schrank I.S."/>
            <person name="Schuck A.F."/>
            <person name="Seuanez H.N."/>
            <person name="Silva D.W."/>
            <person name="Silva R."/>
            <person name="Silva S.C."/>
            <person name="Soares C.M.A."/>
            <person name="Souza K.R.L."/>
            <person name="Souza R.C."/>
            <person name="Staats C.C."/>
            <person name="Steffens M.B.R."/>
            <person name="Teixeira S.M.R."/>
            <person name="Urmenyi T.P."/>
            <person name="Vainstein M.H."/>
            <person name="Zuccherato L.W."/>
            <person name="Simpson A.J.G."/>
            <person name="Zaha A."/>
        </authorList>
    </citation>
    <scope>NUCLEOTIDE SEQUENCE [LARGE SCALE GENOMIC DNA]</scope>
    <source>
        <strain>7448</strain>
    </source>
</reference>
<sequence length="471" mass="51573">MEKQENVGHIVQIFGPVIDVQFPNEHMPAILSALEVKINDESIIFEVAQHLGEGIVRAIAMSMTYNLSKGLEVYDTGSQISVPVGKQVLSRMFNVLGQPIDGGKPLDSFIKNPIHAKAPTYLEQKATSEILVTGIKVIDLLIPFIKGGKIGLFGGAGVGKTVLVQELINNIASKHGGLSVFAGVGERSREGNDLYFEMKKAGVLDKTALVFGQMNEPPGARMRVALSALTMAEYFRDYENQDVLLFIDNIFRFTQAGSEVSTLLGRIPSTVGYQPTLSTEMGQLQERITSTIRGSITSVQAVYVPADDITDPAPATTFSHLDAKTVLDRGIAALGIYPAVDPLASSSRALEPNIVGKKHYLVAKKVVQILQRFKELQDIIAILGVDELSESDKQVVARARRIRNFLSQPFFVAQKFSGIQGQFIKIQDTVNNFDELLSGKYDNIPEEAFLYVGTIDQALEKAKKMGWSEKN</sequence>
<protein>
    <recommendedName>
        <fullName evidence="1">ATP synthase subunit beta</fullName>
        <ecNumber evidence="1">7.1.2.2</ecNumber>
    </recommendedName>
    <alternativeName>
        <fullName evidence="1">ATP synthase F1 sector subunit beta</fullName>
    </alternativeName>
    <alternativeName>
        <fullName evidence="1">F-ATPase subunit beta</fullName>
    </alternativeName>
</protein>
<organism>
    <name type="scientific">Mesomycoplasma hyopneumoniae (strain 7448)</name>
    <name type="common">Mycoplasma hyopneumoniae</name>
    <dbReference type="NCBI Taxonomy" id="262722"/>
    <lineage>
        <taxon>Bacteria</taxon>
        <taxon>Bacillati</taxon>
        <taxon>Mycoplasmatota</taxon>
        <taxon>Mycoplasmoidales</taxon>
        <taxon>Metamycoplasmataceae</taxon>
        <taxon>Mesomycoplasma</taxon>
    </lineage>
</organism>
<evidence type="ECO:0000255" key="1">
    <source>
        <dbReference type="HAMAP-Rule" id="MF_01347"/>
    </source>
</evidence>
<comment type="function">
    <text evidence="1">Produces ATP from ADP in the presence of a proton gradient across the membrane. The catalytic sites are hosted primarily by the beta subunits.</text>
</comment>
<comment type="catalytic activity">
    <reaction evidence="1">
        <text>ATP + H2O + 4 H(+)(in) = ADP + phosphate + 5 H(+)(out)</text>
        <dbReference type="Rhea" id="RHEA:57720"/>
        <dbReference type="ChEBI" id="CHEBI:15377"/>
        <dbReference type="ChEBI" id="CHEBI:15378"/>
        <dbReference type="ChEBI" id="CHEBI:30616"/>
        <dbReference type="ChEBI" id="CHEBI:43474"/>
        <dbReference type="ChEBI" id="CHEBI:456216"/>
        <dbReference type="EC" id="7.1.2.2"/>
    </reaction>
</comment>
<comment type="subunit">
    <text evidence="1">F-type ATPases have 2 components, CF(1) - the catalytic core - and CF(0) - the membrane proton channel. CF(1) has five subunits: alpha(3), beta(3), gamma(1), delta(1), epsilon(1). CF(0) has three main subunits: a(1), b(2) and c(9-12). The alpha and beta chains form an alternating ring which encloses part of the gamma chain. CF(1) is attached to CF(0) by a central stalk formed by the gamma and epsilon chains, while a peripheral stalk is formed by the delta and b chains.</text>
</comment>
<comment type="subcellular location">
    <subcellularLocation>
        <location evidence="1">Cell membrane</location>
        <topology evidence="1">Peripheral membrane protein</topology>
    </subcellularLocation>
</comment>
<comment type="similarity">
    <text evidence="1">Belongs to the ATPase alpha/beta chains family.</text>
</comment>
<gene>
    <name evidence="1" type="primary">atpD</name>
    <name type="ordered locus">MHP7448_0053</name>
</gene>
<keyword id="KW-0066">ATP synthesis</keyword>
<keyword id="KW-0067">ATP-binding</keyword>
<keyword id="KW-1003">Cell membrane</keyword>
<keyword id="KW-0139">CF(1)</keyword>
<keyword id="KW-0375">Hydrogen ion transport</keyword>
<keyword id="KW-0406">Ion transport</keyword>
<keyword id="KW-0472">Membrane</keyword>
<keyword id="KW-0547">Nucleotide-binding</keyword>
<keyword id="KW-1278">Translocase</keyword>
<keyword id="KW-0813">Transport</keyword>
<feature type="chain" id="PRO_0000254303" description="ATP synthase subunit beta">
    <location>
        <begin position="1"/>
        <end position="471"/>
    </location>
</feature>
<feature type="binding site" evidence="1">
    <location>
        <begin position="154"/>
        <end position="161"/>
    </location>
    <ligand>
        <name>ATP</name>
        <dbReference type="ChEBI" id="CHEBI:30616"/>
    </ligand>
</feature>